<dbReference type="EC" id="3.4.23.-"/>
<dbReference type="EMBL" id="AB083326">
    <property type="protein sequence ID" value="BAC20605.1"/>
    <property type="molecule type" value="mRNA"/>
</dbReference>
<dbReference type="SMR" id="Q8HXW5"/>
<dbReference type="STRING" id="9541.ENSMFAP00000002389"/>
<dbReference type="MEROPS" id="A22.001"/>
<dbReference type="eggNOG" id="KOG2736">
    <property type="taxonomic scope" value="Eukaryota"/>
</dbReference>
<dbReference type="Proteomes" id="UP000233100">
    <property type="component" value="Unplaced"/>
</dbReference>
<dbReference type="GO" id="GO:0016235">
    <property type="term" value="C:aggresome"/>
    <property type="evidence" value="ECO:0000250"/>
    <property type="project" value="UniProtKB"/>
</dbReference>
<dbReference type="GO" id="GO:0031901">
    <property type="term" value="C:early endosome membrane"/>
    <property type="evidence" value="ECO:0007669"/>
    <property type="project" value="UniProtKB-SubCell"/>
</dbReference>
<dbReference type="GO" id="GO:0005783">
    <property type="term" value="C:endoplasmic reticulum"/>
    <property type="evidence" value="ECO:0000250"/>
    <property type="project" value="UniProtKB"/>
</dbReference>
<dbReference type="GO" id="GO:0005789">
    <property type="term" value="C:endoplasmic reticulum membrane"/>
    <property type="evidence" value="ECO:0007669"/>
    <property type="project" value="UniProtKB-SubCell"/>
</dbReference>
<dbReference type="GO" id="GO:0070765">
    <property type="term" value="C:gamma-secretase complex"/>
    <property type="evidence" value="ECO:0000250"/>
    <property type="project" value="UniProtKB"/>
</dbReference>
<dbReference type="GO" id="GO:0005794">
    <property type="term" value="C:Golgi apparatus"/>
    <property type="evidence" value="ECO:0000250"/>
    <property type="project" value="UniProtKB"/>
</dbReference>
<dbReference type="GO" id="GO:0000139">
    <property type="term" value="C:Golgi membrane"/>
    <property type="evidence" value="ECO:0007669"/>
    <property type="project" value="UniProtKB-SubCell"/>
</dbReference>
<dbReference type="GO" id="GO:0030426">
    <property type="term" value="C:growth cone"/>
    <property type="evidence" value="ECO:0000250"/>
    <property type="project" value="UniProtKB"/>
</dbReference>
<dbReference type="GO" id="GO:0016020">
    <property type="term" value="C:membrane"/>
    <property type="evidence" value="ECO:0000250"/>
    <property type="project" value="UniProtKB"/>
</dbReference>
<dbReference type="GO" id="GO:0005739">
    <property type="term" value="C:mitochondrion"/>
    <property type="evidence" value="ECO:0000250"/>
    <property type="project" value="UniProtKB"/>
</dbReference>
<dbReference type="GO" id="GO:0043005">
    <property type="term" value="C:neuron projection"/>
    <property type="evidence" value="ECO:0000250"/>
    <property type="project" value="UniProtKB"/>
</dbReference>
<dbReference type="GO" id="GO:0005886">
    <property type="term" value="C:plasma membrane"/>
    <property type="evidence" value="ECO:0000250"/>
    <property type="project" value="UniProtKB"/>
</dbReference>
<dbReference type="GO" id="GO:0045202">
    <property type="term" value="C:synapse"/>
    <property type="evidence" value="ECO:0007669"/>
    <property type="project" value="UniProtKB-SubCell"/>
</dbReference>
<dbReference type="GO" id="GO:0042500">
    <property type="term" value="F:aspartic endopeptidase activity, intramembrane cleaving"/>
    <property type="evidence" value="ECO:0000250"/>
    <property type="project" value="UniProtKB"/>
</dbReference>
<dbReference type="GO" id="GO:0042982">
    <property type="term" value="P:amyloid precursor protein metabolic process"/>
    <property type="evidence" value="ECO:0000250"/>
    <property type="project" value="UniProtKB"/>
</dbReference>
<dbReference type="GO" id="GO:0034205">
    <property type="term" value="P:amyloid-beta formation"/>
    <property type="evidence" value="ECO:0000250"/>
    <property type="project" value="UniProtKB"/>
</dbReference>
<dbReference type="GO" id="GO:0006915">
    <property type="term" value="P:apoptotic process"/>
    <property type="evidence" value="ECO:0007669"/>
    <property type="project" value="UniProtKB-KW"/>
</dbReference>
<dbReference type="GO" id="GO:0007155">
    <property type="term" value="P:cell adhesion"/>
    <property type="evidence" value="ECO:0007669"/>
    <property type="project" value="UniProtKB-KW"/>
</dbReference>
<dbReference type="GO" id="GO:0032469">
    <property type="term" value="P:endoplasmic reticulum calcium ion homeostasis"/>
    <property type="evidence" value="ECO:0000250"/>
    <property type="project" value="UniProtKB"/>
</dbReference>
<dbReference type="GO" id="GO:0035556">
    <property type="term" value="P:intracellular signal transduction"/>
    <property type="evidence" value="ECO:0007669"/>
    <property type="project" value="InterPro"/>
</dbReference>
<dbReference type="GO" id="GO:0006509">
    <property type="term" value="P:membrane protein ectodomain proteolysis"/>
    <property type="evidence" value="ECO:0000250"/>
    <property type="project" value="UniProtKB"/>
</dbReference>
<dbReference type="GO" id="GO:0007219">
    <property type="term" value="P:Notch signaling pathway"/>
    <property type="evidence" value="ECO:0007669"/>
    <property type="project" value="UniProtKB-KW"/>
</dbReference>
<dbReference type="GO" id="GO:0016485">
    <property type="term" value="P:protein processing"/>
    <property type="evidence" value="ECO:0000250"/>
    <property type="project" value="UniProtKB"/>
</dbReference>
<dbReference type="GO" id="GO:0060828">
    <property type="term" value="P:regulation of canonical Wnt signaling pathway"/>
    <property type="evidence" value="ECO:0000250"/>
    <property type="project" value="UniProtKB"/>
</dbReference>
<dbReference type="GO" id="GO:0010975">
    <property type="term" value="P:regulation of neuron projection development"/>
    <property type="evidence" value="ECO:0000250"/>
    <property type="project" value="UniProtKB"/>
</dbReference>
<dbReference type="FunFam" id="1.10.472.100:FF:000001">
    <property type="entry name" value="Presenilin"/>
    <property type="match status" value="1"/>
</dbReference>
<dbReference type="Gene3D" id="1.10.472.100">
    <property type="entry name" value="Presenilin"/>
    <property type="match status" value="1"/>
</dbReference>
<dbReference type="InterPro" id="IPR002031">
    <property type="entry name" value="Pept_A22A_PS1"/>
</dbReference>
<dbReference type="InterPro" id="IPR001108">
    <property type="entry name" value="Peptidase_A22A"/>
</dbReference>
<dbReference type="InterPro" id="IPR006639">
    <property type="entry name" value="Preselin/SPP"/>
</dbReference>
<dbReference type="InterPro" id="IPR042524">
    <property type="entry name" value="Presenilin_C"/>
</dbReference>
<dbReference type="PANTHER" id="PTHR10202">
    <property type="entry name" value="PRESENILIN"/>
    <property type="match status" value="1"/>
</dbReference>
<dbReference type="PANTHER" id="PTHR10202:SF18">
    <property type="entry name" value="PRESENILIN-1"/>
    <property type="match status" value="1"/>
</dbReference>
<dbReference type="Pfam" id="PF01080">
    <property type="entry name" value="Presenilin"/>
    <property type="match status" value="1"/>
</dbReference>
<dbReference type="PRINTS" id="PR01072">
    <property type="entry name" value="PRESENILIN"/>
</dbReference>
<dbReference type="PRINTS" id="PR01073">
    <property type="entry name" value="PRESENILIN1"/>
</dbReference>
<dbReference type="SMART" id="SM00730">
    <property type="entry name" value="PSN"/>
    <property type="match status" value="1"/>
</dbReference>
<reference key="1">
    <citation type="submission" date="2002-04" db="EMBL/GenBank/DDBJ databases">
        <title>Isolation and characterization of cDNA for macaque neurological disease genes.</title>
        <authorList>
            <person name="Kusuda J."/>
            <person name="Osada N."/>
            <person name="Hida M."/>
            <person name="Sugano S."/>
            <person name="Hashimoto K."/>
        </authorList>
    </citation>
    <scope>NUCLEOTIDE SEQUENCE [LARGE SCALE MRNA]</scope>
    <source>
        <tissue>Frontal cortex</tissue>
    </source>
</reference>
<comment type="function">
    <text evidence="2 3">Catalytic subunit of the gamma-secretase complex, an endoprotease complex that catalyzes the intramembrane cleavage of integral membrane proteins such as Notch receptors and APP (amyloid-beta precursor protein). Requires the presence of the other members of the gamma-secretase complex for protease activity. Plays a role in Notch and Wnt signaling cascades and regulation of downstream processes via its role in processing key regulatory proteins, and by regulating cytosolic CTNNB1 levels. Stimulates cell-cell adhesion via its interaction with CDH1; this stabilizes the complexes between CDH1 (E-cadherin) and its interaction partners CTNNB1 (beta-catenin), CTNND1 and JUP (gamma-catenin). Under conditions of apoptosis or calcium influx, cleaves CDH1. This promotes the disassembly of the complexes between CDH1 and CTNND1, JUP and CTNNB1, increases the pool of cytoplasmic CTNNB1, and thereby negatively regulates Wnt signaling (By similarity). Required for normal embryonic brain and skeleton development, and for normal angiogenesis (By similarity). Mediates the proteolytic cleavage of EphB2/CTF1 into EphB2/CTF2 (By similarity). The holoprotein functions as a calcium-leak channel that allows the passive movement of calcium from endoplasmic reticulum to cytosol and is therefore involved in calcium homeostasis. Involved in the regulation of neurite outgrowth (By similarity). Is a regulator of presynaptic facilitation, spike transmission and synaptic vesicles replenishment in a process that depends on gamma-secretase activity. It acts through the control of SYT7 presynaptic expression (By similarity).</text>
</comment>
<comment type="subunit">
    <text evidence="2 3">Homodimer. The functional gamma-secretase complex is composed of at least four polypeptides: a presenilin homodimer (PSEN1 or PSEN2), nicastrin (NCSTN), APH1 (APH1A or APH1B) and PEN2. Such minimal complex is sufficient for secretase activity. Other components which are associated with the complex include SLC25A64, SLC5A7 and PHB. As part of the gamma-secretase complex, interacts with CRB2 (via transmembrane domain) (By similarity). Predominantly heterodimer of a N-terminal (NTF) and a C-terminal (CTF) endoproteolytical fragment. Associates with proteolytic processed C-terminal fragments C83 and C99 of the amyloid precursor protein (APP). Associates with NOTCH1. Associates with cadherin/catenin adhesion complexes through direct binding to CDH1 or CDH2. Interaction with CDH1 stabilizes the complex and stimulates cell-cell aggregation. Interaction with CDH2 is essential for trafficking of CDH2 from the endoplasmic reticulum to the plasma membrane. Interacts with CTNND2, CTNNB1, CTNND1, JUP, HERPUD1, FLNA, FLNB, MTCH1, PKP4 and PARL. Interacts through its N-terminus with GFAP (By similarity). Interacts with DOCK3 (By similarity). Interacts with UBQLN1 (By similarity).</text>
</comment>
<comment type="subcellular location">
    <subcellularLocation>
        <location evidence="2">Endoplasmic reticulum</location>
    </subcellularLocation>
    <subcellularLocation>
        <location evidence="2">Endoplasmic reticulum membrane</location>
        <topology evidence="2">Multi-pass membrane protein</topology>
    </subcellularLocation>
    <subcellularLocation>
        <location evidence="2">Golgi apparatus membrane</location>
        <topology evidence="2">Multi-pass membrane protein</topology>
    </subcellularLocation>
    <subcellularLocation>
        <location evidence="2">Cytoplasmic granule</location>
    </subcellularLocation>
    <subcellularLocation>
        <location evidence="2">Cell membrane</location>
        <topology evidence="2">Multi-pass membrane protein</topology>
    </subcellularLocation>
    <subcellularLocation>
        <location evidence="2">Cell projection</location>
        <location evidence="2">Growth cone</location>
    </subcellularLocation>
    <subcellularLocation>
        <location evidence="2">Early endosome</location>
    </subcellularLocation>
    <subcellularLocation>
        <location evidence="2">Early endosome membrane</location>
        <topology evidence="2">Multi-pass membrane protein</topology>
    </subcellularLocation>
    <subcellularLocation>
        <location evidence="2">Cell projection</location>
        <location evidence="2">Neuron projection</location>
    </subcellularLocation>
    <subcellularLocation>
        <location evidence="5">Cell projection</location>
        <location evidence="5">Axon</location>
    </subcellularLocation>
    <subcellularLocation>
        <location evidence="5">Synapse</location>
    </subcellularLocation>
    <text evidence="2">Translocates with bound NOTCH1 from the endoplasmic reticulum and/or Golgi to the cell surface. Colocalizes with CDH1/2 at sites of cell-cell contact. Colocalizes with CTNNB1 in the endoplasmic reticulum and the proximity of the plasma membrane. Also present in azurophil granules of neutrophils. Colocalizes with UBQLN1 in the cell membrane and in cytoplasmic juxtanuclear structures called aggresomes.</text>
</comment>
<comment type="domain">
    <text evidence="2">The PAL motif is required for normal active site conformation.</text>
</comment>
<comment type="domain">
    <text evidence="2">Substrates, such as NOTCH1 and APP peptides, are bound between PSEN1 transmembrane domains and via the first lumenal loop and the cytoplasmic loop between the sixth and seventh transmembrane domains. Substrate binding causes a conformation change and formation of an intermolecular antiparallel beta-sheet between PSEN1 and its substrates.</text>
</comment>
<comment type="PTM">
    <text evidence="2">Heterogeneous proteolytic processing generates N-terminal (NTF) and C-terminal (CTF) fragments of approximately 35 and 20 kDa, respectively. During apoptosis, the C-terminal fragment (CTF) is further cleaved by caspase-3 to produce the fragment, PS1-CTF12.</text>
</comment>
<comment type="PTM">
    <text evidence="2">After endoproteolysis, the C-terminal fragment (CTF) is phosphorylated on serine residues by PKA and/or PKC. Phosphorylation on Ser-346 inhibits endoproteolysis.</text>
</comment>
<comment type="similarity">
    <text evidence="7">Belongs to the peptidase A22A family.</text>
</comment>
<feature type="chain" id="PRO_0000237611" description="Presenilin-1 NTF subunit" evidence="1">
    <location>
        <begin position="1"/>
        <end position="298"/>
    </location>
</feature>
<feature type="chain" id="PRO_0000237612" description="Presenilin-1 CTF subunit" evidence="1">
    <location>
        <begin position="299"/>
        <end position="467"/>
    </location>
</feature>
<feature type="chain" id="PRO_0000236056" description="Presenilin-1 CTF12" evidence="1">
    <location>
        <begin position="346"/>
        <end position="467"/>
    </location>
</feature>
<feature type="topological domain" description="Cytoplasmic" evidence="2">
    <location>
        <begin position="1"/>
        <end position="82"/>
    </location>
</feature>
<feature type="transmembrane region" description="Helical" evidence="2">
    <location>
        <begin position="83"/>
        <end position="103"/>
    </location>
</feature>
<feature type="topological domain" description="Lumenal" evidence="2">
    <location>
        <begin position="104"/>
        <end position="132"/>
    </location>
</feature>
<feature type="transmembrane region" description="Helical" evidence="2">
    <location>
        <begin position="133"/>
        <end position="153"/>
    </location>
</feature>
<feature type="topological domain" description="Cytoplasmic" evidence="2">
    <location>
        <begin position="154"/>
        <end position="166"/>
    </location>
</feature>
<feature type="transmembrane region" description="Helical" evidence="2">
    <location>
        <begin position="167"/>
        <end position="189"/>
    </location>
</feature>
<feature type="topological domain" description="Lumenal" evidence="2">
    <location>
        <begin position="190"/>
        <end position="194"/>
    </location>
</feature>
<feature type="transmembrane region" description="Helical" evidence="2">
    <location>
        <begin position="195"/>
        <end position="216"/>
    </location>
</feature>
<feature type="topological domain" description="Cytoplasmic" evidence="2">
    <location>
        <begin position="217"/>
        <end position="220"/>
    </location>
</feature>
<feature type="transmembrane region" description="Helical" evidence="2">
    <location>
        <begin position="221"/>
        <end position="241"/>
    </location>
</feature>
<feature type="topological domain" description="Lumenal" evidence="2">
    <location>
        <begin position="242"/>
        <end position="248"/>
    </location>
</feature>
<feature type="transmembrane region" description="Helical" evidence="2">
    <location>
        <begin position="249"/>
        <end position="272"/>
    </location>
</feature>
<feature type="topological domain" description="Cytoplasmic" evidence="2">
    <location>
        <begin position="273"/>
        <end position="380"/>
    </location>
</feature>
<feature type="transmembrane region" description="Helical" evidence="2">
    <location>
        <begin position="381"/>
        <end position="401"/>
    </location>
</feature>
<feature type="topological domain" description="Lumenal" evidence="2">
    <location>
        <begin position="402"/>
        <end position="407"/>
    </location>
</feature>
<feature type="transmembrane region" description="Helical" evidence="2">
    <location>
        <begin position="408"/>
        <end position="428"/>
    </location>
</feature>
<feature type="topological domain" description="Cytoplasmic" evidence="2">
    <location>
        <begin position="429"/>
        <end position="432"/>
    </location>
</feature>
<feature type="transmembrane region" description="Helical" evidence="2">
    <location>
        <begin position="433"/>
        <end position="453"/>
    </location>
</feature>
<feature type="topological domain" description="Lumenal" evidence="2">
    <location>
        <begin position="454"/>
        <end position="467"/>
    </location>
</feature>
<feature type="region of interest" description="Disordered" evidence="6">
    <location>
        <begin position="13"/>
        <end position="68"/>
    </location>
</feature>
<feature type="region of interest" description="Important for cleavage of target proteins" evidence="2">
    <location>
        <begin position="288"/>
        <end position="290"/>
    </location>
</feature>
<feature type="region of interest" description="Disordered" evidence="6">
    <location>
        <begin position="305"/>
        <end position="333"/>
    </location>
</feature>
<feature type="region of interest" description="Required for interaction with CTNNB1" evidence="2">
    <location>
        <begin position="322"/>
        <end position="450"/>
    </location>
</feature>
<feature type="region of interest" description="Required for interaction with CTNND2" evidence="2">
    <location>
        <begin position="372"/>
        <end position="399"/>
    </location>
</feature>
<feature type="region of interest" description="Important for cleavage of target proteins" evidence="2">
    <location>
        <begin position="377"/>
        <end position="381"/>
    </location>
</feature>
<feature type="region of interest" description="Important for cleavage of target proteins" evidence="2">
    <location>
        <begin position="432"/>
        <end position="434"/>
    </location>
</feature>
<feature type="region of interest" description="Interaction with MTCH1" evidence="2">
    <location>
        <begin position="464"/>
        <end position="467"/>
    </location>
</feature>
<feature type="short sequence motif" description="PAL" evidence="7">
    <location>
        <begin position="433"/>
        <end position="435"/>
    </location>
</feature>
<feature type="compositionally biased region" description="Polar residues" evidence="6">
    <location>
        <begin position="13"/>
        <end position="29"/>
    </location>
</feature>
<feature type="compositionally biased region" description="Basic and acidic residues" evidence="6">
    <location>
        <begin position="30"/>
        <end position="45"/>
    </location>
</feature>
<feature type="active site" evidence="2">
    <location>
        <position position="257"/>
    </location>
</feature>
<feature type="active site" evidence="2">
    <location>
        <position position="385"/>
    </location>
</feature>
<feature type="site" description="Cleavage; alternate" evidence="2">
    <location>
        <begin position="291"/>
        <end position="292"/>
    </location>
</feature>
<feature type="site" description="Cleavage; alternate" evidence="2">
    <location>
        <begin position="292"/>
        <end position="293"/>
    </location>
</feature>
<feature type="site" description="Cleavage" evidence="2">
    <location>
        <begin position="298"/>
        <end position="299"/>
    </location>
</feature>
<feature type="site" description="Cleavage; by caspase" evidence="2">
    <location>
        <begin position="345"/>
        <end position="346"/>
    </location>
</feature>
<feature type="modified residue" description="Phosphoserine" evidence="2">
    <location>
        <position position="43"/>
    </location>
</feature>
<feature type="modified residue" description="Phosphoserine" evidence="4">
    <location>
        <position position="51"/>
    </location>
</feature>
<feature type="modified residue" description="Phosphoserine; by PKA" evidence="2">
    <location>
        <position position="310"/>
    </location>
</feature>
<feature type="modified residue" description="Phosphoserine; by PKC" evidence="2">
    <location>
        <position position="346"/>
    </location>
</feature>
<feature type="modified residue" description="Phosphoserine" evidence="2">
    <location>
        <position position="367"/>
    </location>
</feature>
<name>PSN1_MACFA</name>
<protein>
    <recommendedName>
        <fullName>Presenilin-1</fullName>
        <shortName>PS-1</shortName>
        <ecNumber>3.4.23.-</ecNumber>
    </recommendedName>
    <component>
        <recommendedName>
            <fullName>Presenilin-1 NTF subunit</fullName>
        </recommendedName>
    </component>
    <component>
        <recommendedName>
            <fullName>Presenilin-1 CTF subunit</fullName>
        </recommendedName>
    </component>
    <component>
        <recommendedName>
            <fullName>Presenilin-1 CTF12</fullName>
            <shortName>PS1-CTF12</shortName>
        </recommendedName>
    </component>
</protein>
<proteinExistence type="evidence at transcript level"/>
<organism>
    <name type="scientific">Macaca fascicularis</name>
    <name type="common">Crab-eating macaque</name>
    <name type="synonym">Cynomolgus monkey</name>
    <dbReference type="NCBI Taxonomy" id="9541"/>
    <lineage>
        <taxon>Eukaryota</taxon>
        <taxon>Metazoa</taxon>
        <taxon>Chordata</taxon>
        <taxon>Craniata</taxon>
        <taxon>Vertebrata</taxon>
        <taxon>Euteleostomi</taxon>
        <taxon>Mammalia</taxon>
        <taxon>Eutheria</taxon>
        <taxon>Euarchontoglires</taxon>
        <taxon>Primates</taxon>
        <taxon>Haplorrhini</taxon>
        <taxon>Catarrhini</taxon>
        <taxon>Cercopithecidae</taxon>
        <taxon>Cercopithecinae</taxon>
        <taxon>Macaca</taxon>
    </lineage>
</organism>
<sequence length="467" mass="52574">MTELPAPLSYFQNAQMSEDNHLSNTVRSQNDNRERQEHNDRRSLGHPEPLSNGRPQGNSRQVVEQDEEEDEELTLKYGAKHVIMLFVPVTLCMVVVVATIKSVSFYTRKDGQLIYTPFTEDTETVGQRALHSILNAAIMISVIVVMTILLVVLYKYRCYKVIHAWLIISSLLLLFFFSFKNLGEVFKTYNVAVDYITVALLIWNFGVVGMISIHWKGPLRLQQAYLIMISALMALVFIKYLPEWTAWLILAVISVYDLVAVLCPKGPLRMLVETAQERNETLFPALIYSSTMVWLVNMAEGDPEAQRRVSKNSKYNAESTERESQDTVAENDDGGFSEEWEAQRDSHLGPHRSTPESRAAVQELSSSILAGEDPEERGVKLGLGDFIFYSVLVGKASATASGDWNTTIACFVAILIGLCLTLLLLAIFKKALPALPISITFGLVFYSATDYLVQPFMDQLAFHQFYI</sequence>
<gene>
    <name type="primary">PSEN1</name>
    <name type="synonym">PS1</name>
    <name type="synonym">PSNL1</name>
    <name type="ORF">QflA-13153</name>
</gene>
<keyword id="KW-0053">Apoptosis</keyword>
<keyword id="KW-0130">Cell adhesion</keyword>
<keyword id="KW-1003">Cell membrane</keyword>
<keyword id="KW-0966">Cell projection</keyword>
<keyword id="KW-0256">Endoplasmic reticulum</keyword>
<keyword id="KW-0967">Endosome</keyword>
<keyword id="KW-0333">Golgi apparatus</keyword>
<keyword id="KW-0378">Hydrolase</keyword>
<keyword id="KW-0472">Membrane</keyword>
<keyword id="KW-0914">Notch signaling pathway</keyword>
<keyword id="KW-0597">Phosphoprotein</keyword>
<keyword id="KW-0645">Protease</keyword>
<keyword id="KW-1185">Reference proteome</keyword>
<keyword id="KW-0770">Synapse</keyword>
<keyword id="KW-0812">Transmembrane</keyword>
<keyword id="KW-1133">Transmembrane helix</keyword>
<accession>Q8HXW5</accession>
<evidence type="ECO:0000250" key="1"/>
<evidence type="ECO:0000250" key="2">
    <source>
        <dbReference type="UniProtKB" id="P49768"/>
    </source>
</evidence>
<evidence type="ECO:0000250" key="3">
    <source>
        <dbReference type="UniProtKB" id="P49769"/>
    </source>
</evidence>
<evidence type="ECO:0000250" key="4">
    <source>
        <dbReference type="UniProtKB" id="P97887"/>
    </source>
</evidence>
<evidence type="ECO:0000250" key="5">
    <source>
        <dbReference type="UniProtKB" id="Q4JIM4"/>
    </source>
</evidence>
<evidence type="ECO:0000256" key="6">
    <source>
        <dbReference type="SAM" id="MobiDB-lite"/>
    </source>
</evidence>
<evidence type="ECO:0000305" key="7"/>